<name>CYB_BOSMU</name>
<gene>
    <name type="primary">MT-CYB</name>
    <name type="synonym">COB</name>
    <name type="synonym">CYTB</name>
    <name type="synonym">MTCYB</name>
</gene>
<sequence>MTNIRKSHPLMKIVNNAFIDLPAPSNISSWWNFGSLLGVCLILQILTGLFLAMHYTSDTTTAFSSVAHICRDVNYGWIIRYMHANGASMFFICLYMHVGRGLYYGSYTFLETWNIGVTLLLTVMATAFMGYVLPWGQMSFWGATVITNLLSAIPYIGTNLVEWIWGGFSVDKATLTRFFAFHFILPFIITAIAMVHLLFLHETGSNNPTGISSDADKIPFHPYYTIKDILGALLLILALMLLVLFTPDLLGDPDNYTPANPLNTPPHIKPEWYFLFAYAILRSIPNKLGGVLALAFSILILALIPLLHTSKQRSMIFRPLSQCLFWTLVADLLTLTWIGGQPVEHPYIIIGQLASIMYFLLILVLMPTAGTIENKLLKW</sequence>
<evidence type="ECO:0000250" key="1"/>
<evidence type="ECO:0000250" key="2">
    <source>
        <dbReference type="UniProtKB" id="P00157"/>
    </source>
</evidence>
<evidence type="ECO:0000255" key="3">
    <source>
        <dbReference type="PROSITE-ProRule" id="PRU00967"/>
    </source>
</evidence>
<evidence type="ECO:0000255" key="4">
    <source>
        <dbReference type="PROSITE-ProRule" id="PRU00968"/>
    </source>
</evidence>
<geneLocation type="mitochondrion"/>
<comment type="function">
    <text evidence="2">Component of the ubiquinol-cytochrome c reductase complex (complex III or cytochrome b-c1 complex) that is part of the mitochondrial respiratory chain. The b-c1 complex mediates electron transfer from ubiquinol to cytochrome c. Contributes to the generation of a proton gradient across the mitochondrial membrane that is then used for ATP synthesis.</text>
</comment>
<comment type="cofactor">
    <cofactor evidence="2">
        <name>heme b</name>
        <dbReference type="ChEBI" id="CHEBI:60344"/>
    </cofactor>
    <text evidence="2">Binds 2 heme b groups non-covalently.</text>
</comment>
<comment type="subunit">
    <text evidence="2">The cytochrome bc1 complex contains 11 subunits: 3 respiratory subunits (MT-CYB, CYC1 and UQCRFS1), 2 core proteins (UQCRC1 and UQCRC2) and 6 low-molecular weight proteins (UQCRH/QCR6, UQCRB/QCR7, UQCRQ/QCR8, UQCR10/QCR9, UQCR11/QCR10 and a cleavage product of UQCRFS1). This cytochrome bc1 complex then forms a dimer.</text>
</comment>
<comment type="subcellular location">
    <subcellularLocation>
        <location evidence="2">Mitochondrion inner membrane</location>
        <topology evidence="2">Multi-pass membrane protein</topology>
    </subcellularLocation>
</comment>
<comment type="miscellaneous">
    <text evidence="1">Heme 1 (or BL or b562) is low-potential and absorbs at about 562 nm, and heme 2 (or BH or b566) is high-potential and absorbs at about 566 nm.</text>
</comment>
<comment type="similarity">
    <text evidence="3 4">Belongs to the cytochrome b family.</text>
</comment>
<comment type="caution">
    <text evidence="2">The full-length protein contains only eight transmembrane helices, not nine as predicted by bioinformatics tools.</text>
</comment>
<protein>
    <recommendedName>
        <fullName>Cytochrome b</fullName>
    </recommendedName>
    <alternativeName>
        <fullName>Complex III subunit 3</fullName>
    </alternativeName>
    <alternativeName>
        <fullName>Complex III subunit III</fullName>
    </alternativeName>
    <alternativeName>
        <fullName>Cytochrome b-c1 complex subunit 3</fullName>
    </alternativeName>
    <alternativeName>
        <fullName>Ubiquinol-cytochrome-c reductase complex cytochrome b subunit</fullName>
    </alternativeName>
</protein>
<organism>
    <name type="scientific">Bos mutus grunniens</name>
    <name type="common">Wild yak</name>
    <name type="synonym">Bos grunniens</name>
    <dbReference type="NCBI Taxonomy" id="30521"/>
    <lineage>
        <taxon>Eukaryota</taxon>
        <taxon>Metazoa</taxon>
        <taxon>Chordata</taxon>
        <taxon>Craniata</taxon>
        <taxon>Vertebrata</taxon>
        <taxon>Euteleostomi</taxon>
        <taxon>Mammalia</taxon>
        <taxon>Eutheria</taxon>
        <taxon>Laurasiatheria</taxon>
        <taxon>Artiodactyla</taxon>
        <taxon>Ruminantia</taxon>
        <taxon>Pecora</taxon>
        <taxon>Bovidae</taxon>
        <taxon>Bovinae</taxon>
        <taxon>Bos</taxon>
    </lineage>
</organism>
<feature type="chain" id="PRO_0000253511" description="Cytochrome b">
    <location>
        <begin position="1"/>
        <end position="379"/>
    </location>
</feature>
<feature type="transmembrane region" description="Helical" evidence="2">
    <location>
        <begin position="33"/>
        <end position="53"/>
    </location>
</feature>
<feature type="transmembrane region" description="Helical" evidence="2">
    <location>
        <begin position="77"/>
        <end position="98"/>
    </location>
</feature>
<feature type="transmembrane region" description="Helical" evidence="2">
    <location>
        <begin position="113"/>
        <end position="133"/>
    </location>
</feature>
<feature type="transmembrane region" description="Helical" evidence="2">
    <location>
        <begin position="178"/>
        <end position="198"/>
    </location>
</feature>
<feature type="transmembrane region" description="Helical" evidence="2">
    <location>
        <begin position="226"/>
        <end position="246"/>
    </location>
</feature>
<feature type="transmembrane region" description="Helical" evidence="2">
    <location>
        <begin position="288"/>
        <end position="308"/>
    </location>
</feature>
<feature type="transmembrane region" description="Helical" evidence="2">
    <location>
        <begin position="320"/>
        <end position="340"/>
    </location>
</feature>
<feature type="transmembrane region" description="Helical" evidence="2">
    <location>
        <begin position="347"/>
        <end position="367"/>
    </location>
</feature>
<feature type="binding site" description="axial binding residue" evidence="2">
    <location>
        <position position="83"/>
    </location>
    <ligand>
        <name>heme b</name>
        <dbReference type="ChEBI" id="CHEBI:60344"/>
        <label>b562</label>
    </ligand>
    <ligandPart>
        <name>Fe</name>
        <dbReference type="ChEBI" id="CHEBI:18248"/>
    </ligandPart>
</feature>
<feature type="binding site" description="axial binding residue" evidence="2">
    <location>
        <position position="97"/>
    </location>
    <ligand>
        <name>heme b</name>
        <dbReference type="ChEBI" id="CHEBI:60344"/>
        <label>b566</label>
    </ligand>
    <ligandPart>
        <name>Fe</name>
        <dbReference type="ChEBI" id="CHEBI:18248"/>
    </ligandPart>
</feature>
<feature type="binding site" description="axial binding residue" evidence="2">
    <location>
        <position position="182"/>
    </location>
    <ligand>
        <name>heme b</name>
        <dbReference type="ChEBI" id="CHEBI:60344"/>
        <label>b562</label>
    </ligand>
    <ligandPart>
        <name>Fe</name>
        <dbReference type="ChEBI" id="CHEBI:18248"/>
    </ligandPart>
</feature>
<feature type="binding site" description="axial binding residue" evidence="2">
    <location>
        <position position="196"/>
    </location>
    <ligand>
        <name>heme b</name>
        <dbReference type="ChEBI" id="CHEBI:60344"/>
        <label>b566</label>
    </ligand>
    <ligandPart>
        <name>Fe</name>
        <dbReference type="ChEBI" id="CHEBI:18248"/>
    </ligandPart>
</feature>
<feature type="binding site" evidence="2">
    <location>
        <position position="201"/>
    </location>
    <ligand>
        <name>a ubiquinone</name>
        <dbReference type="ChEBI" id="CHEBI:16389"/>
    </ligand>
</feature>
<proteinExistence type="inferred from homology"/>
<accession>Q5Y4Q0</accession>
<keyword id="KW-0249">Electron transport</keyword>
<keyword id="KW-0349">Heme</keyword>
<keyword id="KW-0408">Iron</keyword>
<keyword id="KW-0472">Membrane</keyword>
<keyword id="KW-0479">Metal-binding</keyword>
<keyword id="KW-0496">Mitochondrion</keyword>
<keyword id="KW-0999">Mitochondrion inner membrane</keyword>
<keyword id="KW-1185">Reference proteome</keyword>
<keyword id="KW-0679">Respiratory chain</keyword>
<keyword id="KW-0812">Transmembrane</keyword>
<keyword id="KW-1133">Transmembrane helix</keyword>
<keyword id="KW-0813">Transport</keyword>
<keyword id="KW-0830">Ubiquinone</keyword>
<reference key="1">
    <citation type="submission" date="2004-10" db="EMBL/GenBank/DDBJ databases">
        <title>Complete sequence of the Yak (Bos grunniens.) mitochondrial genome and its genetic relationship with related species.</title>
        <authorList>
            <person name="Gu Z."/>
            <person name="Zhao X."/>
            <person name="Li N."/>
            <person name="Wu C."/>
        </authorList>
    </citation>
    <scope>NUCLEOTIDE SEQUENCE [GENOMIC DNA]</scope>
</reference>
<dbReference type="EMBL" id="AY684273">
    <property type="protein sequence ID" value="AAU89116.1"/>
    <property type="molecule type" value="Genomic_DNA"/>
</dbReference>
<dbReference type="SMR" id="Q5Y4Q0"/>
<dbReference type="Proteomes" id="UP000694520">
    <property type="component" value="Unplaced"/>
</dbReference>
<dbReference type="GO" id="GO:0005743">
    <property type="term" value="C:mitochondrial inner membrane"/>
    <property type="evidence" value="ECO:0007669"/>
    <property type="project" value="UniProtKB-SubCell"/>
</dbReference>
<dbReference type="GO" id="GO:0045275">
    <property type="term" value="C:respiratory chain complex III"/>
    <property type="evidence" value="ECO:0007669"/>
    <property type="project" value="InterPro"/>
</dbReference>
<dbReference type="GO" id="GO:0046872">
    <property type="term" value="F:metal ion binding"/>
    <property type="evidence" value="ECO:0007669"/>
    <property type="project" value="UniProtKB-KW"/>
</dbReference>
<dbReference type="GO" id="GO:0008121">
    <property type="term" value="F:ubiquinol-cytochrome-c reductase activity"/>
    <property type="evidence" value="ECO:0007669"/>
    <property type="project" value="InterPro"/>
</dbReference>
<dbReference type="GO" id="GO:0006122">
    <property type="term" value="P:mitochondrial electron transport, ubiquinol to cytochrome c"/>
    <property type="evidence" value="ECO:0007669"/>
    <property type="project" value="TreeGrafter"/>
</dbReference>
<dbReference type="CDD" id="cd00290">
    <property type="entry name" value="cytochrome_b_C"/>
    <property type="match status" value="1"/>
</dbReference>
<dbReference type="CDD" id="cd00284">
    <property type="entry name" value="Cytochrome_b_N"/>
    <property type="match status" value="1"/>
</dbReference>
<dbReference type="FunFam" id="1.20.810.10:FF:000002">
    <property type="entry name" value="Cytochrome b"/>
    <property type="match status" value="1"/>
</dbReference>
<dbReference type="Gene3D" id="1.20.810.10">
    <property type="entry name" value="Cytochrome Bc1 Complex, Chain C"/>
    <property type="match status" value="1"/>
</dbReference>
<dbReference type="InterPro" id="IPR005798">
    <property type="entry name" value="Cyt_b/b6_C"/>
</dbReference>
<dbReference type="InterPro" id="IPR036150">
    <property type="entry name" value="Cyt_b/b6_C_sf"/>
</dbReference>
<dbReference type="InterPro" id="IPR005797">
    <property type="entry name" value="Cyt_b/b6_N"/>
</dbReference>
<dbReference type="InterPro" id="IPR027387">
    <property type="entry name" value="Cytb/b6-like_sf"/>
</dbReference>
<dbReference type="InterPro" id="IPR030689">
    <property type="entry name" value="Cytochrome_b"/>
</dbReference>
<dbReference type="InterPro" id="IPR048260">
    <property type="entry name" value="Cytochrome_b_C_euk/bac"/>
</dbReference>
<dbReference type="InterPro" id="IPR048259">
    <property type="entry name" value="Cytochrome_b_N_euk/bac"/>
</dbReference>
<dbReference type="InterPro" id="IPR016174">
    <property type="entry name" value="Di-haem_cyt_TM"/>
</dbReference>
<dbReference type="PANTHER" id="PTHR19271">
    <property type="entry name" value="CYTOCHROME B"/>
    <property type="match status" value="1"/>
</dbReference>
<dbReference type="PANTHER" id="PTHR19271:SF16">
    <property type="entry name" value="CYTOCHROME B"/>
    <property type="match status" value="1"/>
</dbReference>
<dbReference type="Pfam" id="PF00032">
    <property type="entry name" value="Cytochrom_B_C"/>
    <property type="match status" value="1"/>
</dbReference>
<dbReference type="Pfam" id="PF00033">
    <property type="entry name" value="Cytochrome_B"/>
    <property type="match status" value="1"/>
</dbReference>
<dbReference type="PIRSF" id="PIRSF038885">
    <property type="entry name" value="COB"/>
    <property type="match status" value="1"/>
</dbReference>
<dbReference type="SUPFAM" id="SSF81648">
    <property type="entry name" value="a domain/subunit of cytochrome bc1 complex (Ubiquinol-cytochrome c reductase)"/>
    <property type="match status" value="1"/>
</dbReference>
<dbReference type="SUPFAM" id="SSF81342">
    <property type="entry name" value="Transmembrane di-heme cytochromes"/>
    <property type="match status" value="1"/>
</dbReference>
<dbReference type="PROSITE" id="PS51003">
    <property type="entry name" value="CYTB_CTER"/>
    <property type="match status" value="1"/>
</dbReference>
<dbReference type="PROSITE" id="PS51002">
    <property type="entry name" value="CYTB_NTER"/>
    <property type="match status" value="1"/>
</dbReference>